<name>RS2_LIMF3</name>
<organism>
    <name type="scientific">Limosilactobacillus fermentum (strain NBRC 3956 / LMG 18251)</name>
    <name type="common">Lactobacillus fermentum</name>
    <dbReference type="NCBI Taxonomy" id="334390"/>
    <lineage>
        <taxon>Bacteria</taxon>
        <taxon>Bacillati</taxon>
        <taxon>Bacillota</taxon>
        <taxon>Bacilli</taxon>
        <taxon>Lactobacillales</taxon>
        <taxon>Lactobacillaceae</taxon>
        <taxon>Limosilactobacillus</taxon>
    </lineage>
</organism>
<comment type="similarity">
    <text evidence="1">Belongs to the universal ribosomal protein uS2 family.</text>
</comment>
<sequence>MPVVSMKQLLEAGVHFGHQTRRWNPKMKPFIFTERNGIYIIDLQKTVKMIDTAYNYVKDVAADGGVVLFVGTKKQAQDSIEEEATRAGQYYVNHRWLGGTLTNWKTIQSRISRLKELKKMAEDGTFDRLPKKEVAVLTKQREKLERFLGGIEDMPRIPDVLYIVDPHKEQIAVKEAQKLHIPIVAMVDTNTDPDDIDVIIPSNDDAIRAVRLITAKMADAVIEGKQGEDDQQVAPAEDVAEEVSDESLQDLKNSVEGND</sequence>
<dbReference type="EMBL" id="AP008937">
    <property type="protein sequence ID" value="BAG27050.1"/>
    <property type="molecule type" value="Genomic_DNA"/>
</dbReference>
<dbReference type="RefSeq" id="WP_003681957.1">
    <property type="nucleotide sequence ID" value="NC_010610.1"/>
</dbReference>
<dbReference type="SMR" id="B2GBL8"/>
<dbReference type="GeneID" id="83714916"/>
<dbReference type="KEGG" id="lfe:LAF_0714"/>
<dbReference type="eggNOG" id="COG0052">
    <property type="taxonomic scope" value="Bacteria"/>
</dbReference>
<dbReference type="HOGENOM" id="CLU_040318_1_2_9"/>
<dbReference type="Proteomes" id="UP000001697">
    <property type="component" value="Chromosome"/>
</dbReference>
<dbReference type="GO" id="GO:0022627">
    <property type="term" value="C:cytosolic small ribosomal subunit"/>
    <property type="evidence" value="ECO:0007669"/>
    <property type="project" value="TreeGrafter"/>
</dbReference>
<dbReference type="GO" id="GO:0003735">
    <property type="term" value="F:structural constituent of ribosome"/>
    <property type="evidence" value="ECO:0007669"/>
    <property type="project" value="InterPro"/>
</dbReference>
<dbReference type="GO" id="GO:0006412">
    <property type="term" value="P:translation"/>
    <property type="evidence" value="ECO:0007669"/>
    <property type="project" value="UniProtKB-UniRule"/>
</dbReference>
<dbReference type="CDD" id="cd01425">
    <property type="entry name" value="RPS2"/>
    <property type="match status" value="1"/>
</dbReference>
<dbReference type="FunFam" id="1.10.287.610:FF:000001">
    <property type="entry name" value="30S ribosomal protein S2"/>
    <property type="match status" value="1"/>
</dbReference>
<dbReference type="Gene3D" id="3.40.50.10490">
    <property type="entry name" value="Glucose-6-phosphate isomerase like protein, domain 1"/>
    <property type="match status" value="1"/>
</dbReference>
<dbReference type="Gene3D" id="1.10.287.610">
    <property type="entry name" value="Helix hairpin bin"/>
    <property type="match status" value="1"/>
</dbReference>
<dbReference type="HAMAP" id="MF_00291_B">
    <property type="entry name" value="Ribosomal_uS2_B"/>
    <property type="match status" value="1"/>
</dbReference>
<dbReference type="InterPro" id="IPR001865">
    <property type="entry name" value="Ribosomal_uS2"/>
</dbReference>
<dbReference type="InterPro" id="IPR005706">
    <property type="entry name" value="Ribosomal_uS2_bac/mit/plastid"/>
</dbReference>
<dbReference type="InterPro" id="IPR018130">
    <property type="entry name" value="Ribosomal_uS2_CS"/>
</dbReference>
<dbReference type="InterPro" id="IPR023591">
    <property type="entry name" value="Ribosomal_uS2_flav_dom_sf"/>
</dbReference>
<dbReference type="NCBIfam" id="TIGR01011">
    <property type="entry name" value="rpsB_bact"/>
    <property type="match status" value="1"/>
</dbReference>
<dbReference type="PANTHER" id="PTHR12534">
    <property type="entry name" value="30S RIBOSOMAL PROTEIN S2 PROKARYOTIC AND ORGANELLAR"/>
    <property type="match status" value="1"/>
</dbReference>
<dbReference type="PANTHER" id="PTHR12534:SF0">
    <property type="entry name" value="SMALL RIBOSOMAL SUBUNIT PROTEIN US2M"/>
    <property type="match status" value="1"/>
</dbReference>
<dbReference type="Pfam" id="PF00318">
    <property type="entry name" value="Ribosomal_S2"/>
    <property type="match status" value="1"/>
</dbReference>
<dbReference type="PRINTS" id="PR00395">
    <property type="entry name" value="RIBOSOMALS2"/>
</dbReference>
<dbReference type="SUPFAM" id="SSF52313">
    <property type="entry name" value="Ribosomal protein S2"/>
    <property type="match status" value="1"/>
</dbReference>
<dbReference type="PROSITE" id="PS00962">
    <property type="entry name" value="RIBOSOMAL_S2_1"/>
    <property type="match status" value="1"/>
</dbReference>
<proteinExistence type="inferred from homology"/>
<accession>B2GBL8</accession>
<gene>
    <name evidence="1" type="primary">rpsB</name>
    <name type="ordered locus">LAF_0714</name>
</gene>
<protein>
    <recommendedName>
        <fullName evidence="1">Small ribosomal subunit protein uS2</fullName>
    </recommendedName>
    <alternativeName>
        <fullName evidence="3">30S ribosomal protein S2</fullName>
    </alternativeName>
</protein>
<keyword id="KW-1185">Reference proteome</keyword>
<keyword id="KW-0687">Ribonucleoprotein</keyword>
<keyword id="KW-0689">Ribosomal protein</keyword>
<reference key="1">
    <citation type="journal article" date="2008" name="DNA Res.">
        <title>Comparative genome analysis of Lactobacillus reuteri and Lactobacillus fermentum reveal a genomic island for reuterin and cobalamin production.</title>
        <authorList>
            <person name="Morita H."/>
            <person name="Toh H."/>
            <person name="Fukuda S."/>
            <person name="Horikawa H."/>
            <person name="Oshima K."/>
            <person name="Suzuki T."/>
            <person name="Murakami M."/>
            <person name="Hisamatsu S."/>
            <person name="Kato Y."/>
            <person name="Takizawa T."/>
            <person name="Fukuoka H."/>
            <person name="Yoshimura T."/>
            <person name="Itoh K."/>
            <person name="O'Sullivan D.J."/>
            <person name="McKay L.L."/>
            <person name="Ohno H."/>
            <person name="Kikuchi J."/>
            <person name="Masaoka T."/>
            <person name="Hattori M."/>
        </authorList>
    </citation>
    <scope>NUCLEOTIDE SEQUENCE [LARGE SCALE GENOMIC DNA]</scope>
    <source>
        <strain>NBRC 3956 / LMG 18251</strain>
    </source>
</reference>
<evidence type="ECO:0000255" key="1">
    <source>
        <dbReference type="HAMAP-Rule" id="MF_00291"/>
    </source>
</evidence>
<evidence type="ECO:0000256" key="2">
    <source>
        <dbReference type="SAM" id="MobiDB-lite"/>
    </source>
</evidence>
<evidence type="ECO:0000305" key="3"/>
<feature type="chain" id="PRO_1000115031" description="Small ribosomal subunit protein uS2">
    <location>
        <begin position="1"/>
        <end position="259"/>
    </location>
</feature>
<feature type="region of interest" description="Disordered" evidence="2">
    <location>
        <begin position="224"/>
        <end position="259"/>
    </location>
</feature>
<feature type="compositionally biased region" description="Acidic residues" evidence="2">
    <location>
        <begin position="238"/>
        <end position="248"/>
    </location>
</feature>
<feature type="compositionally biased region" description="Polar residues" evidence="2">
    <location>
        <begin position="250"/>
        <end position="259"/>
    </location>
</feature>